<proteinExistence type="inferred from homology"/>
<gene>
    <name evidence="1" type="primary">ulaR</name>
    <name type="ordered locus">SNSL254_A4742</name>
</gene>
<accession>B4T3E2</accession>
<sequence length="251" mass="27487">MTEAQRHQILLDMLAQLGFVTVENVIERLGISPATARRDINKLDESGKLKKVRNGAEAITQQRPRWTPMNLHQAQNHDEKVRIAKAASQLVNPGESVVINCGSTAFLLGREMCGKPVQIITNYLPLANYLIDQEHDSVIIMGGQYNKSQSITLSPQGSENSLYAGHWMFTSGKGLTADGLYKTDMLTAMAEQKMLSVVGKLVALVDSSKIGERAGMLFSRADQIAMLITGKNANPQVLQQLEAQGVSILRV</sequence>
<feature type="chain" id="PRO_1000190475" description="HTH-type transcriptional regulator UlaR">
    <location>
        <begin position="1"/>
        <end position="251"/>
    </location>
</feature>
<feature type="domain" description="HTH deoR-type" evidence="1">
    <location>
        <begin position="3"/>
        <end position="58"/>
    </location>
</feature>
<feature type="DNA-binding region" description="H-T-H motif" evidence="1">
    <location>
        <begin position="20"/>
        <end position="39"/>
    </location>
</feature>
<comment type="function">
    <text evidence="1">Represses ulaG and the ulaABCDEF operon.</text>
</comment>
<comment type="subcellular location">
    <subcellularLocation>
        <location evidence="1">Cytoplasm</location>
    </subcellularLocation>
</comment>
<organism>
    <name type="scientific">Salmonella newport (strain SL254)</name>
    <dbReference type="NCBI Taxonomy" id="423368"/>
    <lineage>
        <taxon>Bacteria</taxon>
        <taxon>Pseudomonadati</taxon>
        <taxon>Pseudomonadota</taxon>
        <taxon>Gammaproteobacteria</taxon>
        <taxon>Enterobacterales</taxon>
        <taxon>Enterobacteriaceae</taxon>
        <taxon>Salmonella</taxon>
    </lineage>
</organism>
<evidence type="ECO:0000255" key="1">
    <source>
        <dbReference type="HAMAP-Rule" id="MF_01563"/>
    </source>
</evidence>
<reference key="1">
    <citation type="journal article" date="2011" name="J. Bacteriol.">
        <title>Comparative genomics of 28 Salmonella enterica isolates: evidence for CRISPR-mediated adaptive sublineage evolution.</title>
        <authorList>
            <person name="Fricke W.F."/>
            <person name="Mammel M.K."/>
            <person name="McDermott P.F."/>
            <person name="Tartera C."/>
            <person name="White D.G."/>
            <person name="Leclerc J.E."/>
            <person name="Ravel J."/>
            <person name="Cebula T.A."/>
        </authorList>
    </citation>
    <scope>NUCLEOTIDE SEQUENCE [LARGE SCALE GENOMIC DNA]</scope>
    <source>
        <strain>SL254</strain>
    </source>
</reference>
<name>ULAR_SALNS</name>
<keyword id="KW-0963">Cytoplasm</keyword>
<keyword id="KW-0238">DNA-binding</keyword>
<keyword id="KW-0678">Repressor</keyword>
<keyword id="KW-0804">Transcription</keyword>
<keyword id="KW-0805">Transcription regulation</keyword>
<protein>
    <recommendedName>
        <fullName evidence="1">HTH-type transcriptional regulator UlaR</fullName>
    </recommendedName>
</protein>
<dbReference type="EMBL" id="CP001113">
    <property type="protein sequence ID" value="ACF62049.1"/>
    <property type="molecule type" value="Genomic_DNA"/>
</dbReference>
<dbReference type="RefSeq" id="WP_000133618.1">
    <property type="nucleotide sequence ID" value="NZ_CCMR01000003.1"/>
</dbReference>
<dbReference type="SMR" id="B4T3E2"/>
<dbReference type="KEGG" id="see:SNSL254_A4742"/>
<dbReference type="HOGENOM" id="CLU_060699_3_2_6"/>
<dbReference type="Proteomes" id="UP000008824">
    <property type="component" value="Chromosome"/>
</dbReference>
<dbReference type="GO" id="GO:0005737">
    <property type="term" value="C:cytoplasm"/>
    <property type="evidence" value="ECO:0007669"/>
    <property type="project" value="UniProtKB-SubCell"/>
</dbReference>
<dbReference type="GO" id="GO:0003677">
    <property type="term" value="F:DNA binding"/>
    <property type="evidence" value="ECO:0007669"/>
    <property type="project" value="UniProtKB-KW"/>
</dbReference>
<dbReference type="GO" id="GO:0003700">
    <property type="term" value="F:DNA-binding transcription factor activity"/>
    <property type="evidence" value="ECO:0007669"/>
    <property type="project" value="InterPro"/>
</dbReference>
<dbReference type="GO" id="GO:0045892">
    <property type="term" value="P:negative regulation of DNA-templated transcription"/>
    <property type="evidence" value="ECO:0007669"/>
    <property type="project" value="UniProtKB-UniRule"/>
</dbReference>
<dbReference type="FunFam" id="1.10.10.10:FF:000160">
    <property type="entry name" value="HTH-type transcriptional regulator UlaR"/>
    <property type="match status" value="1"/>
</dbReference>
<dbReference type="Gene3D" id="1.10.10.10">
    <property type="entry name" value="Winged helix-like DNA-binding domain superfamily/Winged helix DNA-binding domain"/>
    <property type="match status" value="1"/>
</dbReference>
<dbReference type="HAMAP" id="MF_01563">
    <property type="entry name" value="HTH_type_UlaR"/>
    <property type="match status" value="1"/>
</dbReference>
<dbReference type="InterPro" id="IPR050313">
    <property type="entry name" value="Carb_Metab_HTH_regulators"/>
</dbReference>
<dbReference type="InterPro" id="IPR014036">
    <property type="entry name" value="DeoR-like_C"/>
</dbReference>
<dbReference type="InterPro" id="IPR001034">
    <property type="entry name" value="DeoR_HTH"/>
</dbReference>
<dbReference type="InterPro" id="IPR037171">
    <property type="entry name" value="NagB/RpiA_transferase-like"/>
</dbReference>
<dbReference type="InterPro" id="IPR018356">
    <property type="entry name" value="Tscrpt_reg_HTH_DeoR_CS"/>
</dbReference>
<dbReference type="InterPro" id="IPR023711">
    <property type="entry name" value="Tscrpt_reg_HTH_UlaR"/>
</dbReference>
<dbReference type="InterPro" id="IPR036388">
    <property type="entry name" value="WH-like_DNA-bd_sf"/>
</dbReference>
<dbReference type="InterPro" id="IPR036390">
    <property type="entry name" value="WH_DNA-bd_sf"/>
</dbReference>
<dbReference type="NCBIfam" id="NF010034">
    <property type="entry name" value="PRK13509.1"/>
    <property type="match status" value="1"/>
</dbReference>
<dbReference type="PANTHER" id="PTHR30363">
    <property type="entry name" value="HTH-TYPE TRANSCRIPTIONAL REGULATOR SRLR-RELATED"/>
    <property type="match status" value="1"/>
</dbReference>
<dbReference type="PANTHER" id="PTHR30363:SF55">
    <property type="entry name" value="HTH-TYPE TRANSCRIPTIONAL REGULATOR ULAR"/>
    <property type="match status" value="1"/>
</dbReference>
<dbReference type="Pfam" id="PF00455">
    <property type="entry name" value="DeoRC"/>
    <property type="match status" value="1"/>
</dbReference>
<dbReference type="Pfam" id="PF08220">
    <property type="entry name" value="HTH_DeoR"/>
    <property type="match status" value="1"/>
</dbReference>
<dbReference type="PRINTS" id="PR00037">
    <property type="entry name" value="HTHLACR"/>
</dbReference>
<dbReference type="SMART" id="SM01134">
    <property type="entry name" value="DeoRC"/>
    <property type="match status" value="1"/>
</dbReference>
<dbReference type="SMART" id="SM00420">
    <property type="entry name" value="HTH_DEOR"/>
    <property type="match status" value="1"/>
</dbReference>
<dbReference type="SUPFAM" id="SSF100950">
    <property type="entry name" value="NagB/RpiA/CoA transferase-like"/>
    <property type="match status" value="1"/>
</dbReference>
<dbReference type="SUPFAM" id="SSF46785">
    <property type="entry name" value="Winged helix' DNA-binding domain"/>
    <property type="match status" value="1"/>
</dbReference>
<dbReference type="PROSITE" id="PS00894">
    <property type="entry name" value="HTH_DEOR_1"/>
    <property type="match status" value="1"/>
</dbReference>
<dbReference type="PROSITE" id="PS51000">
    <property type="entry name" value="HTH_DEOR_2"/>
    <property type="match status" value="1"/>
</dbReference>